<geneLocation type="plasmid">
    <name>pBTs1</name>
</geneLocation>
<sequence length="205" mass="24130">MNIPPIYTGSIVPLDISNIDTDAIIPKEFLQKVTKTGFGKHLFNNWRYTDHNNKILNPDFNLNKPCYRESTILLTRDNFGCGSSREHAVWALLDYGIKIIISSSFSDIFYTNSFNNQLLLITLDKTTIDLFFNLIKKNKINEITVDLIENYVFFEKKRYYFYLSNFHRMCILNGLDEIDFTLQHYKKIKKYGNQIPNFFVYNSIS</sequence>
<accession>O31294</accession>
<dbReference type="EC" id="4.2.1.33"/>
<dbReference type="EMBL" id="Y11966">
    <property type="protein sequence ID" value="CAA72695.1"/>
    <property type="molecule type" value="Genomic_DNA"/>
</dbReference>
<dbReference type="SMR" id="O31294"/>
<dbReference type="UniPathway" id="UPA00048">
    <property type="reaction ID" value="UER00071"/>
</dbReference>
<dbReference type="GO" id="GO:0009316">
    <property type="term" value="C:3-isopropylmalate dehydratase complex"/>
    <property type="evidence" value="ECO:0007669"/>
    <property type="project" value="InterPro"/>
</dbReference>
<dbReference type="GO" id="GO:0003861">
    <property type="term" value="F:3-isopropylmalate dehydratase activity"/>
    <property type="evidence" value="ECO:0007669"/>
    <property type="project" value="UniProtKB-UniRule"/>
</dbReference>
<dbReference type="GO" id="GO:0009098">
    <property type="term" value="P:L-leucine biosynthetic process"/>
    <property type="evidence" value="ECO:0007669"/>
    <property type="project" value="UniProtKB-UniRule"/>
</dbReference>
<dbReference type="FunFam" id="3.20.19.10:FF:000003">
    <property type="entry name" value="3-isopropylmalate dehydratase small subunit"/>
    <property type="match status" value="1"/>
</dbReference>
<dbReference type="Gene3D" id="3.20.19.10">
    <property type="entry name" value="Aconitase, domain 4"/>
    <property type="match status" value="1"/>
</dbReference>
<dbReference type="HAMAP" id="MF_01031">
    <property type="entry name" value="LeuD_type1"/>
    <property type="match status" value="1"/>
</dbReference>
<dbReference type="InterPro" id="IPR004431">
    <property type="entry name" value="3-IsopropMal_deHydase_ssu"/>
</dbReference>
<dbReference type="InterPro" id="IPR015928">
    <property type="entry name" value="Aconitase/3IPM_dehydase_swvl"/>
</dbReference>
<dbReference type="InterPro" id="IPR000573">
    <property type="entry name" value="AconitaseA/IPMdHydase_ssu_swvl"/>
</dbReference>
<dbReference type="InterPro" id="IPR050075">
    <property type="entry name" value="LeuD"/>
</dbReference>
<dbReference type="NCBIfam" id="TIGR00171">
    <property type="entry name" value="leuD"/>
    <property type="match status" value="1"/>
</dbReference>
<dbReference type="NCBIfam" id="NF002458">
    <property type="entry name" value="PRK01641.1"/>
    <property type="match status" value="1"/>
</dbReference>
<dbReference type="PANTHER" id="PTHR43345:SF5">
    <property type="entry name" value="3-ISOPROPYLMALATE DEHYDRATASE SMALL SUBUNIT"/>
    <property type="match status" value="1"/>
</dbReference>
<dbReference type="PANTHER" id="PTHR43345">
    <property type="entry name" value="3-ISOPROPYLMALATE DEHYDRATASE SMALL SUBUNIT 2-RELATED-RELATED"/>
    <property type="match status" value="1"/>
</dbReference>
<dbReference type="Pfam" id="PF00694">
    <property type="entry name" value="Aconitase_C"/>
    <property type="match status" value="1"/>
</dbReference>
<dbReference type="SUPFAM" id="SSF52016">
    <property type="entry name" value="LeuD/IlvD-like"/>
    <property type="match status" value="1"/>
</dbReference>
<keyword id="KW-0028">Amino-acid biosynthesis</keyword>
<keyword id="KW-0100">Branched-chain amino acid biosynthesis</keyword>
<keyword id="KW-0432">Leucine biosynthesis</keyword>
<keyword id="KW-0456">Lyase</keyword>
<keyword id="KW-0614">Plasmid</keyword>
<comment type="function">
    <text evidence="1">Catalyzes the isomerization between 2-isopropylmalate and 3-isopropylmalate, via the formation of 2-isopropylmaleate.</text>
</comment>
<comment type="catalytic activity">
    <reaction>
        <text>(2R,3S)-3-isopropylmalate = (2S)-2-isopropylmalate</text>
        <dbReference type="Rhea" id="RHEA:32287"/>
        <dbReference type="ChEBI" id="CHEBI:1178"/>
        <dbReference type="ChEBI" id="CHEBI:35121"/>
        <dbReference type="EC" id="4.2.1.33"/>
    </reaction>
</comment>
<comment type="pathway">
    <text>Amino-acid biosynthesis; L-leucine biosynthesis; L-leucine from 3-methyl-2-oxobutanoate: step 2/4.</text>
</comment>
<comment type="subunit">
    <text>Heterodimer of LeuC and LeuD.</text>
</comment>
<comment type="similarity">
    <text evidence="2">Belongs to the LeuD family. LeuD type 1 subfamily.</text>
</comment>
<reference key="1">
    <citation type="journal article" date="1997" name="J. Bacteriol.">
        <title>Putative evolutionary origin of plasmids carrying the genes involved in leucine biosynthesis in Buchnera aphidicola (endosymbiont of aphids).</title>
        <authorList>
            <person name="van Ham R.C.H.J."/>
            <person name="Moya A."/>
            <person name="Latorre A."/>
        </authorList>
    </citation>
    <scope>NUCLEOTIDE SEQUENCE [GENOMIC DNA]</scope>
</reference>
<feature type="chain" id="PRO_0000141804" description="3-isopropylmalate dehydratase small subunit">
    <location>
        <begin position="1"/>
        <end position="205"/>
    </location>
</feature>
<organism>
    <name type="scientific">Buchnera aphidicola subsp. Thelaxes suberi</name>
    <dbReference type="NCBI Taxonomy" id="98797"/>
    <lineage>
        <taxon>Bacteria</taxon>
        <taxon>Pseudomonadati</taxon>
        <taxon>Pseudomonadota</taxon>
        <taxon>Gammaproteobacteria</taxon>
        <taxon>Enterobacterales</taxon>
        <taxon>Erwiniaceae</taxon>
        <taxon>Buchnera</taxon>
    </lineage>
</organism>
<name>LEUD_BUCTS</name>
<evidence type="ECO:0000250" key="1"/>
<evidence type="ECO:0000305" key="2"/>
<gene>
    <name type="primary">leuD</name>
</gene>
<protein>
    <recommendedName>
        <fullName>3-isopropylmalate dehydratase small subunit</fullName>
        <ecNumber>4.2.1.33</ecNumber>
    </recommendedName>
    <alternativeName>
        <fullName>Alpha-IPM isomerase</fullName>
        <shortName>IPMI</shortName>
    </alternativeName>
    <alternativeName>
        <fullName>Isopropylmalate isomerase</fullName>
    </alternativeName>
</protein>
<proteinExistence type="inferred from homology"/>